<gene>
    <name evidence="1" type="primary">rbsD</name>
    <name type="ordered locus">Teth39_2041</name>
</gene>
<dbReference type="EC" id="5.4.99.62" evidence="1"/>
<dbReference type="EMBL" id="CP000924">
    <property type="protein sequence ID" value="ABY95666.1"/>
    <property type="molecule type" value="Genomic_DNA"/>
</dbReference>
<dbReference type="RefSeq" id="WP_009051946.1">
    <property type="nucleotide sequence ID" value="NC_010321.1"/>
</dbReference>
<dbReference type="SMR" id="B0KDE7"/>
<dbReference type="STRING" id="340099.Teth39_2041"/>
<dbReference type="KEGG" id="tpd:Teth39_2041"/>
<dbReference type="eggNOG" id="COG1869">
    <property type="taxonomic scope" value="Bacteria"/>
</dbReference>
<dbReference type="HOGENOM" id="CLU_135498_0_0_9"/>
<dbReference type="UniPathway" id="UPA00916">
    <property type="reaction ID" value="UER00888"/>
</dbReference>
<dbReference type="Proteomes" id="UP000002156">
    <property type="component" value="Chromosome"/>
</dbReference>
<dbReference type="GO" id="GO:0005829">
    <property type="term" value="C:cytosol"/>
    <property type="evidence" value="ECO:0007669"/>
    <property type="project" value="TreeGrafter"/>
</dbReference>
<dbReference type="GO" id="GO:0062193">
    <property type="term" value="F:D-ribose pyranase activity"/>
    <property type="evidence" value="ECO:0007669"/>
    <property type="project" value="UniProtKB-EC"/>
</dbReference>
<dbReference type="GO" id="GO:0016872">
    <property type="term" value="F:intramolecular lyase activity"/>
    <property type="evidence" value="ECO:0007669"/>
    <property type="project" value="UniProtKB-UniRule"/>
</dbReference>
<dbReference type="GO" id="GO:0048029">
    <property type="term" value="F:monosaccharide binding"/>
    <property type="evidence" value="ECO:0007669"/>
    <property type="project" value="InterPro"/>
</dbReference>
<dbReference type="GO" id="GO:0019303">
    <property type="term" value="P:D-ribose catabolic process"/>
    <property type="evidence" value="ECO:0007669"/>
    <property type="project" value="UniProtKB-UniRule"/>
</dbReference>
<dbReference type="Gene3D" id="3.40.1650.10">
    <property type="entry name" value="RbsD-like domain"/>
    <property type="match status" value="1"/>
</dbReference>
<dbReference type="HAMAP" id="MF_01661">
    <property type="entry name" value="D_rib_pyranase"/>
    <property type="match status" value="1"/>
</dbReference>
<dbReference type="InterPro" id="IPR023064">
    <property type="entry name" value="D-ribose_pyranase"/>
</dbReference>
<dbReference type="InterPro" id="IPR023750">
    <property type="entry name" value="RbsD-like_sf"/>
</dbReference>
<dbReference type="InterPro" id="IPR007721">
    <property type="entry name" value="RbsD_FucU"/>
</dbReference>
<dbReference type="NCBIfam" id="NF008761">
    <property type="entry name" value="PRK11797.1"/>
    <property type="match status" value="1"/>
</dbReference>
<dbReference type="PANTHER" id="PTHR37831">
    <property type="entry name" value="D-RIBOSE PYRANASE"/>
    <property type="match status" value="1"/>
</dbReference>
<dbReference type="PANTHER" id="PTHR37831:SF1">
    <property type="entry name" value="D-RIBOSE PYRANASE"/>
    <property type="match status" value="1"/>
</dbReference>
<dbReference type="Pfam" id="PF05025">
    <property type="entry name" value="RbsD_FucU"/>
    <property type="match status" value="1"/>
</dbReference>
<dbReference type="SUPFAM" id="SSF102546">
    <property type="entry name" value="RbsD-like"/>
    <property type="match status" value="1"/>
</dbReference>
<reference key="1">
    <citation type="submission" date="2008-01" db="EMBL/GenBank/DDBJ databases">
        <title>Complete sequence of Thermoanaerobacter pseudethanolicus 39E.</title>
        <authorList>
            <person name="Copeland A."/>
            <person name="Lucas S."/>
            <person name="Lapidus A."/>
            <person name="Barry K."/>
            <person name="Glavina del Rio T."/>
            <person name="Dalin E."/>
            <person name="Tice H."/>
            <person name="Pitluck S."/>
            <person name="Bruce D."/>
            <person name="Goodwin L."/>
            <person name="Saunders E."/>
            <person name="Brettin T."/>
            <person name="Detter J.C."/>
            <person name="Han C."/>
            <person name="Schmutz J."/>
            <person name="Larimer F."/>
            <person name="Land M."/>
            <person name="Hauser L."/>
            <person name="Kyrpides N."/>
            <person name="Lykidis A."/>
            <person name="Hemme C."/>
            <person name="Fields M.W."/>
            <person name="He Z."/>
            <person name="Zhou J."/>
            <person name="Richardson P."/>
        </authorList>
    </citation>
    <scope>NUCLEOTIDE SEQUENCE [LARGE SCALE GENOMIC DNA]</scope>
    <source>
        <strain>ATCC 33223 / DSM 2355 / 39E</strain>
    </source>
</reference>
<accession>B0KDE7</accession>
<organism>
    <name type="scientific">Thermoanaerobacter pseudethanolicus (strain ATCC 33223 / 39E)</name>
    <name type="common">Clostridium thermohydrosulfuricum</name>
    <dbReference type="NCBI Taxonomy" id="340099"/>
    <lineage>
        <taxon>Bacteria</taxon>
        <taxon>Bacillati</taxon>
        <taxon>Bacillota</taxon>
        <taxon>Clostridia</taxon>
        <taxon>Thermoanaerobacterales</taxon>
        <taxon>Thermoanaerobacteraceae</taxon>
        <taxon>Thermoanaerobacter</taxon>
    </lineage>
</organism>
<name>RBSD_THEP3</name>
<evidence type="ECO:0000255" key="1">
    <source>
        <dbReference type="HAMAP-Rule" id="MF_01661"/>
    </source>
</evidence>
<comment type="function">
    <text evidence="1">Catalyzes the interconversion of beta-pyran and beta-furan forms of D-ribose.</text>
</comment>
<comment type="catalytic activity">
    <reaction evidence="1">
        <text>beta-D-ribopyranose = beta-D-ribofuranose</text>
        <dbReference type="Rhea" id="RHEA:25432"/>
        <dbReference type="ChEBI" id="CHEBI:27476"/>
        <dbReference type="ChEBI" id="CHEBI:47002"/>
        <dbReference type="EC" id="5.4.99.62"/>
    </reaction>
</comment>
<comment type="pathway">
    <text evidence="1">Carbohydrate metabolism; D-ribose degradation; D-ribose 5-phosphate from beta-D-ribopyranose: step 1/2.</text>
</comment>
<comment type="subunit">
    <text evidence="1">Homodecamer.</text>
</comment>
<comment type="subcellular location">
    <subcellularLocation>
        <location evidence="1">Cytoplasm</location>
    </subcellularLocation>
</comment>
<comment type="similarity">
    <text evidence="1">Belongs to the RbsD / FucU family. RbsD subfamily.</text>
</comment>
<protein>
    <recommendedName>
        <fullName evidence="1">D-ribose pyranase</fullName>
        <ecNumber evidence="1">5.4.99.62</ecNumber>
    </recommendedName>
</protein>
<proteinExistence type="inferred from homology"/>
<sequence>MKKTYLLNSEISEVVARLGHTDLLVIADSGLPIPDGVKRIDIALTKGIPSFKDTLNTVLTELGVEKAYIAKEMIDKNNDLYLYLLELFGEKLIIISHEDLKAMSKNARAIIRTGEYKPYANIILESGVEF</sequence>
<keyword id="KW-0119">Carbohydrate metabolism</keyword>
<keyword id="KW-0963">Cytoplasm</keyword>
<keyword id="KW-0413">Isomerase</keyword>
<keyword id="KW-1185">Reference proteome</keyword>
<feature type="chain" id="PRO_0000346287" description="D-ribose pyranase">
    <location>
        <begin position="1"/>
        <end position="130"/>
    </location>
</feature>
<feature type="active site" description="Proton donor" evidence="1">
    <location>
        <position position="20"/>
    </location>
</feature>
<feature type="binding site" evidence="1">
    <location>
        <position position="28"/>
    </location>
    <ligand>
        <name>substrate</name>
    </ligand>
</feature>
<feature type="binding site" evidence="1">
    <location>
        <position position="97"/>
    </location>
    <ligand>
        <name>substrate</name>
    </ligand>
</feature>
<feature type="binding site" evidence="1">
    <location>
        <begin position="119"/>
        <end position="121"/>
    </location>
    <ligand>
        <name>substrate</name>
    </ligand>
</feature>